<keyword id="KW-0044">Antibiotic</keyword>
<keyword id="KW-0929">Antimicrobial</keyword>
<keyword id="KW-0903">Direct protein sequencing</keyword>
<keyword id="KW-1015">Disulfide bond</keyword>
<keyword id="KW-0391">Immunity</keyword>
<keyword id="KW-0399">Innate immunity</keyword>
<keyword id="KW-0646">Protease inhibitor</keyword>
<keyword id="KW-1185">Reference proteome</keyword>
<keyword id="KW-0677">Repeat</keyword>
<keyword id="KW-0964">Secreted</keyword>
<keyword id="KW-0722">Serine protease inhibitor</keyword>
<keyword id="KW-0732">Signal</keyword>
<accession>P22298</accession>
<sequence length="129" mass="13919">GRGLLPFVLLALGIXAPWAVEGAENALKGGACPPRKIVQCLRYEKPKCTSDWQCPDKKKCCRDTCAIKCLNPVAITNPVKVKPGKCPVVYGQCMMLNPPNHCKTDSQCLGDLKCCKSMCGKVCLTPVKA</sequence>
<feature type="signal peptide" evidence="4">
    <location>
        <begin position="1" status="less than"/>
        <end position="22"/>
    </location>
</feature>
<feature type="chain" id="PRO_0000188985" description="Antileukoproteinase">
    <location>
        <begin position="23"/>
        <end position="129"/>
    </location>
</feature>
<feature type="domain" description="WAP 1" evidence="3">
    <location>
        <begin position="25"/>
        <end position="73"/>
    </location>
</feature>
<feature type="domain" description="WAP 2" evidence="3">
    <location>
        <begin position="79"/>
        <end position="127"/>
    </location>
</feature>
<feature type="region of interest" description="Elastase inhibitory domain">
    <location>
        <begin position="81"/>
        <end position="129"/>
    </location>
</feature>
<feature type="site" description="Reactive bond for chymotrypsin, trypsin and elastase" evidence="1">
    <location>
        <begin position="94"/>
        <end position="95"/>
    </location>
</feature>
<feature type="disulfide bond" evidence="3">
    <location>
        <begin position="32"/>
        <end position="61"/>
    </location>
</feature>
<feature type="disulfide bond" evidence="3">
    <location>
        <begin position="40"/>
        <end position="65"/>
    </location>
</feature>
<feature type="disulfide bond" evidence="3">
    <location>
        <begin position="48"/>
        <end position="60"/>
    </location>
</feature>
<feature type="disulfide bond" evidence="3">
    <location>
        <begin position="54"/>
        <end position="69"/>
    </location>
</feature>
<feature type="disulfide bond" evidence="3">
    <location>
        <begin position="86"/>
        <end position="115"/>
    </location>
</feature>
<feature type="disulfide bond" evidence="3">
    <location>
        <begin position="93"/>
        <end position="119"/>
    </location>
</feature>
<feature type="disulfide bond" evidence="3">
    <location>
        <begin position="102"/>
        <end position="114"/>
    </location>
</feature>
<feature type="disulfide bond" evidence="3">
    <location>
        <begin position="108"/>
        <end position="123"/>
    </location>
</feature>
<feature type="non-terminal residue">
    <location>
        <position position="1"/>
    </location>
</feature>
<comment type="function">
    <text evidence="1 2">Acid-stable proteinase inhibitor with strong affinities for trypsin, chymotrypsin, elastase, and cathepsin G. Modulates the inflammatory and immune responses after bacterial infection, and after infection by the intracellular parasite L.major. Down-regulates responses to bacterial lipopolysaccharide (LPS). Plays a role in regulating the activation of NF-kappa-B and inflammatory responses. Has antimicrobial activity against mycobacteria, but not against salmonella. Contributes to normal resistance against infection by M.tuberculosis. Required for normal resistance to infection by L.major. Required for normal wound healing, probably by preventing tissue damage by limiting protease activity (By similarity). Together with ELANE, required for normal differentiation and proliferation of bone marrow myeloid cells (By similarity).</text>
</comment>
<comment type="subunit">
    <text evidence="1">Interacts with GRN; interaction protects progranulin from proteolysis.</text>
</comment>
<comment type="subcellular location">
    <subcellularLocation>
        <location evidence="4">Secreted</location>
    </subcellularLocation>
</comment>
<comment type="tissue specificity">
    <text evidence="4">Found in pregnant endometrium and myometrium, placenta, allantoic fluids, fetal cord blood, and fetal liver. Also found in uterus and lung.</text>
</comment>
<comment type="developmental stage">
    <text evidence="4">Levels in endometrium, allantoic fluids, and fetal cord blood change with the stage of pregnancy. Maximal expression found at mid- and late gestation (at protein level).</text>
</comment>
<comment type="induction">
    <text>By estrogen and progesterone; in uterus.</text>
</comment>
<comment type="sequence caution" evidence="6">
    <conflict type="frameshift">
        <sequence resource="EMBL-CDS" id="AAA63446"/>
    </conflict>
</comment>
<evidence type="ECO:0000250" key="1">
    <source>
        <dbReference type="UniProtKB" id="P03973"/>
    </source>
</evidence>
<evidence type="ECO:0000250" key="2">
    <source>
        <dbReference type="UniProtKB" id="P97430"/>
    </source>
</evidence>
<evidence type="ECO:0000255" key="3">
    <source>
        <dbReference type="PROSITE-ProRule" id="PRU00722"/>
    </source>
</evidence>
<evidence type="ECO:0000269" key="4">
    <source>
    </source>
</evidence>
<evidence type="ECO:0000303" key="5">
    <source>
    </source>
</evidence>
<evidence type="ECO:0000305" key="6"/>
<reference key="1">
    <citation type="journal article" date="1990" name="Mol. Endocrinol.">
        <title>Complementary DNA cloning and regulation of expression of the messenger RNA encoding a pregnancy-associated porcine uterine protein related to human antileukoproteinase.</title>
        <authorList>
            <person name="Farmer S.J."/>
            <person name="Fliss A.E."/>
            <person name="Simmen R.C.M."/>
        </authorList>
    </citation>
    <scope>NUCLEOTIDE SEQUENCE [MRNA]</scope>
    <source>
        <tissue>Uterus</tissue>
    </source>
</reference>
<reference key="2">
    <citation type="journal article" date="1992" name="Endocrinology">
        <title>Ontogeny, immunocytochemical localization, and biochemical properties of the pregnancy-associated uterine elastase/cathepsin-G protease inhibitor, antileukoproteinase (ALP): monospecific antibodies to a synthetic peptide recognize native ALP.</title>
        <authorList>
            <person name="Simmen R.C."/>
            <person name="Michel F.J."/>
            <person name="Fliss A.E."/>
            <person name="Smith L.C."/>
            <person name="Fliss M.F."/>
        </authorList>
    </citation>
    <scope>PROTEIN SEQUENCE OF 23-40</scope>
    <scope>DEVELOPMENTAL STAGE</scope>
    <scope>TISSUE SPECIFICITY</scope>
    <scope>SUBCELLULAR LOCATION</scope>
</reference>
<protein>
    <recommendedName>
        <fullName>Antileukoproteinase</fullName>
        <shortName>ALP</shortName>
    </recommendedName>
    <alternativeName>
        <fullName>Secretory leukocyte protease inhibitor</fullName>
    </alternativeName>
</protein>
<gene>
    <name type="primary">SLPI</name>
    <name evidence="5" type="synonym">ALP</name>
</gene>
<organism>
    <name type="scientific">Sus scrofa</name>
    <name type="common">Pig</name>
    <dbReference type="NCBI Taxonomy" id="9823"/>
    <lineage>
        <taxon>Eukaryota</taxon>
        <taxon>Metazoa</taxon>
        <taxon>Chordata</taxon>
        <taxon>Craniata</taxon>
        <taxon>Vertebrata</taxon>
        <taxon>Euteleostomi</taxon>
        <taxon>Mammalia</taxon>
        <taxon>Eutheria</taxon>
        <taxon>Laurasiatheria</taxon>
        <taxon>Artiodactyla</taxon>
        <taxon>Suina</taxon>
        <taxon>Suidae</taxon>
        <taxon>Sus</taxon>
    </lineage>
</organism>
<dbReference type="EMBL" id="M57446">
    <property type="protein sequence ID" value="AAA63446.1"/>
    <property type="status" value="ALT_SEQ"/>
    <property type="molecule type" value="mRNA"/>
</dbReference>
<dbReference type="PIR" id="A36113">
    <property type="entry name" value="A36113"/>
</dbReference>
<dbReference type="RefSeq" id="NP_999035.1">
    <property type="nucleotide sequence ID" value="NM_213870.1"/>
</dbReference>
<dbReference type="FunCoup" id="P22298">
    <property type="interactions" value="126"/>
</dbReference>
<dbReference type="STRING" id="9823.ENSSSCP00000039177"/>
<dbReference type="MEROPS" id="I17.001"/>
<dbReference type="MEROPS" id="I17.950"/>
<dbReference type="PaxDb" id="9823-ENSSSCP00000024994"/>
<dbReference type="PeptideAtlas" id="P22298"/>
<dbReference type="GeneID" id="396886"/>
<dbReference type="KEGG" id="ssc:396886"/>
<dbReference type="CTD" id="6590"/>
<dbReference type="eggNOG" id="ENOG502SWIR">
    <property type="taxonomic scope" value="Eukaryota"/>
</dbReference>
<dbReference type="InParanoid" id="P22298"/>
<dbReference type="OrthoDB" id="4473401at2759"/>
<dbReference type="Proteomes" id="UP000008227">
    <property type="component" value="Unplaced"/>
</dbReference>
<dbReference type="Proteomes" id="UP000314985">
    <property type="component" value="Unplaced"/>
</dbReference>
<dbReference type="Proteomes" id="UP000694570">
    <property type="component" value="Unplaced"/>
</dbReference>
<dbReference type="Proteomes" id="UP000694571">
    <property type="component" value="Unplaced"/>
</dbReference>
<dbReference type="Proteomes" id="UP000694720">
    <property type="component" value="Unplaced"/>
</dbReference>
<dbReference type="Proteomes" id="UP000694722">
    <property type="component" value="Unplaced"/>
</dbReference>
<dbReference type="Proteomes" id="UP000694723">
    <property type="component" value="Unplaced"/>
</dbReference>
<dbReference type="Proteomes" id="UP000694724">
    <property type="component" value="Unplaced"/>
</dbReference>
<dbReference type="Proteomes" id="UP000694725">
    <property type="component" value="Unplaced"/>
</dbReference>
<dbReference type="Proteomes" id="UP000694726">
    <property type="component" value="Unplaced"/>
</dbReference>
<dbReference type="Proteomes" id="UP000694727">
    <property type="component" value="Unplaced"/>
</dbReference>
<dbReference type="Proteomes" id="UP000694728">
    <property type="component" value="Unplaced"/>
</dbReference>
<dbReference type="GO" id="GO:0005615">
    <property type="term" value="C:extracellular space"/>
    <property type="evidence" value="ECO:0000250"/>
    <property type="project" value="UniProtKB"/>
</dbReference>
<dbReference type="GO" id="GO:0004866">
    <property type="term" value="F:endopeptidase inhibitor activity"/>
    <property type="evidence" value="ECO:0000250"/>
    <property type="project" value="UniProtKB"/>
</dbReference>
<dbReference type="GO" id="GO:0004867">
    <property type="term" value="F:serine-type endopeptidase inhibitor activity"/>
    <property type="evidence" value="ECO:0000250"/>
    <property type="project" value="UniProtKB"/>
</dbReference>
<dbReference type="GO" id="GO:0019731">
    <property type="term" value="P:antibacterial humoral response"/>
    <property type="evidence" value="ECO:0000250"/>
    <property type="project" value="UniProtKB"/>
</dbReference>
<dbReference type="GO" id="GO:0006955">
    <property type="term" value="P:immune response"/>
    <property type="evidence" value="ECO:0000250"/>
    <property type="project" value="UniProtKB"/>
</dbReference>
<dbReference type="GO" id="GO:0045087">
    <property type="term" value="P:innate immune response"/>
    <property type="evidence" value="ECO:0000250"/>
    <property type="project" value="UniProtKB"/>
</dbReference>
<dbReference type="GO" id="GO:0032496">
    <property type="term" value="P:response to lipopolysaccharide"/>
    <property type="evidence" value="ECO:0000250"/>
    <property type="project" value="UniProtKB"/>
</dbReference>
<dbReference type="CDD" id="cd00199">
    <property type="entry name" value="WAP"/>
    <property type="match status" value="1"/>
</dbReference>
<dbReference type="FunFam" id="4.10.75.10:FF:000001">
    <property type="entry name" value="Anosmin 1"/>
    <property type="match status" value="2"/>
</dbReference>
<dbReference type="Gene3D" id="4.10.75.10">
    <property type="entry name" value="Elafin-like"/>
    <property type="match status" value="2"/>
</dbReference>
<dbReference type="InterPro" id="IPR036645">
    <property type="entry name" value="Elafin-like_sf"/>
</dbReference>
<dbReference type="InterPro" id="IPR008197">
    <property type="entry name" value="WAP_dom"/>
</dbReference>
<dbReference type="InterPro" id="IPR050514">
    <property type="entry name" value="WAP_four-disulfide_core"/>
</dbReference>
<dbReference type="PANTHER" id="PTHR19441:SF44">
    <property type="entry name" value="ANTILEUKOPROTEINASE"/>
    <property type="match status" value="1"/>
</dbReference>
<dbReference type="PANTHER" id="PTHR19441">
    <property type="entry name" value="WHEY ACDIC PROTEIN WAP"/>
    <property type="match status" value="1"/>
</dbReference>
<dbReference type="Pfam" id="PF00095">
    <property type="entry name" value="WAP"/>
    <property type="match status" value="2"/>
</dbReference>
<dbReference type="PRINTS" id="PR00003">
    <property type="entry name" value="4DISULPHCORE"/>
</dbReference>
<dbReference type="SMART" id="SM00217">
    <property type="entry name" value="WAP"/>
    <property type="match status" value="2"/>
</dbReference>
<dbReference type="SUPFAM" id="SSF57256">
    <property type="entry name" value="Elafin-like"/>
    <property type="match status" value="2"/>
</dbReference>
<dbReference type="PROSITE" id="PS51390">
    <property type="entry name" value="WAP"/>
    <property type="match status" value="2"/>
</dbReference>
<name>SLPI_PIG</name>
<proteinExistence type="evidence at protein level"/>